<geneLocation type="plasmid">
    <name>IncJ pMERPH</name>
</geneLocation>
<sequence length="557" mass="59336">MILLSIEGMTCPSCVAHVKEALDAIEGVNKVEISYENARATITTNGGVSVTVLIGAIEALGYIAKESTGTAKEITSPNDCCDNENASNTESNQTQHVAIIGTGSGAFACAIKAAEGGAKVTLIEGADVIGGCCVNVGCVPSKILIRAAQLAQQQRNNPFTGLENHAPQLSRALLTQQQTARVEELRAAKYQNILETNPALSLLKGWAQFKNANTLIVRKNDGTEQAVHADKILIATGSTPTIPPIDGLTETPYWTSTEALFAQELPQHLVVIGSSVVALEIAQAYRRLGSEVTILARHTLLYREDPLLGEKLTGCFEKEGIRVLNSTQATKVTHDGSQFTLETNAGDLRCDRLLVSTGRHANTCQLNLGAVGVTTNKKGEIVVNERMETNVPGIYAAGDCCNMPQFVYVAAAAGSRSGINMTGGYAKLDLSTMPAVIFTDPQVATVGLTEEQANAQDIETDSRVLEMENVPRALANFETDGFIKLVTEKATGRLIGAQILAHEGGELIQSAALAIRNRMTVTELADQLFPYLTMVEGLKLCAQTFNKDVKELSCCAG</sequence>
<dbReference type="EC" id="1.16.1.1" evidence="1"/>
<dbReference type="EMBL" id="Z49196">
    <property type="protein sequence ID" value="CAA89057.1"/>
    <property type="molecule type" value="Genomic_DNA"/>
</dbReference>
<dbReference type="SMR" id="Q54465"/>
<dbReference type="GO" id="GO:0050660">
    <property type="term" value="F:flavin adenine dinucleotide binding"/>
    <property type="evidence" value="ECO:0007669"/>
    <property type="project" value="InterPro"/>
</dbReference>
<dbReference type="GO" id="GO:0016152">
    <property type="term" value="F:mercury (II) reductase (NADP+) activity"/>
    <property type="evidence" value="ECO:0007669"/>
    <property type="project" value="UniProtKB-EC"/>
</dbReference>
<dbReference type="GO" id="GO:0045340">
    <property type="term" value="F:mercury ion binding"/>
    <property type="evidence" value="ECO:0007669"/>
    <property type="project" value="InterPro"/>
</dbReference>
<dbReference type="GO" id="GO:0003955">
    <property type="term" value="F:NAD(P)H dehydrogenase (quinone) activity"/>
    <property type="evidence" value="ECO:0007669"/>
    <property type="project" value="TreeGrafter"/>
</dbReference>
<dbReference type="GO" id="GO:0050661">
    <property type="term" value="F:NADP binding"/>
    <property type="evidence" value="ECO:0007669"/>
    <property type="project" value="InterPro"/>
</dbReference>
<dbReference type="GO" id="GO:0016668">
    <property type="term" value="F:oxidoreductase activity, acting on a sulfur group of donors, NAD(P) as acceptor"/>
    <property type="evidence" value="ECO:0007669"/>
    <property type="project" value="InterPro"/>
</dbReference>
<dbReference type="GO" id="GO:0050787">
    <property type="term" value="P:detoxification of mercury ion"/>
    <property type="evidence" value="ECO:0007669"/>
    <property type="project" value="InterPro"/>
</dbReference>
<dbReference type="CDD" id="cd00371">
    <property type="entry name" value="HMA"/>
    <property type="match status" value="1"/>
</dbReference>
<dbReference type="FunFam" id="3.30.390.30:FF:000001">
    <property type="entry name" value="Dihydrolipoyl dehydrogenase"/>
    <property type="match status" value="1"/>
</dbReference>
<dbReference type="Gene3D" id="3.30.390.30">
    <property type="match status" value="1"/>
</dbReference>
<dbReference type="Gene3D" id="3.30.70.100">
    <property type="match status" value="1"/>
</dbReference>
<dbReference type="Gene3D" id="3.50.50.60">
    <property type="entry name" value="FAD/NAD(P)-binding domain"/>
    <property type="match status" value="2"/>
</dbReference>
<dbReference type="InterPro" id="IPR036188">
    <property type="entry name" value="FAD/NAD-bd_sf"/>
</dbReference>
<dbReference type="InterPro" id="IPR023753">
    <property type="entry name" value="FAD/NAD-binding_dom"/>
</dbReference>
<dbReference type="InterPro" id="IPR016156">
    <property type="entry name" value="FAD/NAD-linked_Rdtase_dimer_sf"/>
</dbReference>
<dbReference type="InterPro" id="IPR017969">
    <property type="entry name" value="Heavy-metal-associated_CS"/>
</dbReference>
<dbReference type="InterPro" id="IPR006121">
    <property type="entry name" value="HMA_dom"/>
</dbReference>
<dbReference type="InterPro" id="IPR036163">
    <property type="entry name" value="HMA_dom_sf"/>
</dbReference>
<dbReference type="InterPro" id="IPR021179">
    <property type="entry name" value="Mercury_reductase_MerA"/>
</dbReference>
<dbReference type="InterPro" id="IPR001100">
    <property type="entry name" value="Pyr_nuc-diS_OxRdtase"/>
</dbReference>
<dbReference type="InterPro" id="IPR004099">
    <property type="entry name" value="Pyr_nucl-diS_OxRdtase_dimer"/>
</dbReference>
<dbReference type="InterPro" id="IPR012999">
    <property type="entry name" value="Pyr_OxRdtase_I_AS"/>
</dbReference>
<dbReference type="NCBIfam" id="TIGR02053">
    <property type="entry name" value="MerA"/>
    <property type="match status" value="1"/>
</dbReference>
<dbReference type="NCBIfam" id="NF010311">
    <property type="entry name" value="PRK13748.1"/>
    <property type="match status" value="1"/>
</dbReference>
<dbReference type="PANTHER" id="PTHR43014">
    <property type="entry name" value="MERCURIC REDUCTASE"/>
    <property type="match status" value="1"/>
</dbReference>
<dbReference type="PANTHER" id="PTHR43014:SF2">
    <property type="entry name" value="MERCURIC REDUCTASE"/>
    <property type="match status" value="1"/>
</dbReference>
<dbReference type="Pfam" id="PF00403">
    <property type="entry name" value="HMA"/>
    <property type="match status" value="1"/>
</dbReference>
<dbReference type="Pfam" id="PF07992">
    <property type="entry name" value="Pyr_redox_2"/>
    <property type="match status" value="1"/>
</dbReference>
<dbReference type="Pfam" id="PF02852">
    <property type="entry name" value="Pyr_redox_dim"/>
    <property type="match status" value="1"/>
</dbReference>
<dbReference type="PIRSF" id="PIRSF000350">
    <property type="entry name" value="Mercury_reductase_MerA"/>
    <property type="match status" value="1"/>
</dbReference>
<dbReference type="PRINTS" id="PR00945">
    <property type="entry name" value="HGRDTASE"/>
</dbReference>
<dbReference type="SUPFAM" id="SSF51905">
    <property type="entry name" value="FAD/NAD(P)-binding domain"/>
    <property type="match status" value="1"/>
</dbReference>
<dbReference type="SUPFAM" id="SSF55424">
    <property type="entry name" value="FAD/NAD-linked reductases, dimerisation (C-terminal) domain"/>
    <property type="match status" value="1"/>
</dbReference>
<dbReference type="SUPFAM" id="SSF55008">
    <property type="entry name" value="HMA, heavy metal-associated domain"/>
    <property type="match status" value="1"/>
</dbReference>
<dbReference type="PROSITE" id="PS01047">
    <property type="entry name" value="HMA_1"/>
    <property type="match status" value="1"/>
</dbReference>
<dbReference type="PROSITE" id="PS50846">
    <property type="entry name" value="HMA_2"/>
    <property type="match status" value="1"/>
</dbReference>
<dbReference type="PROSITE" id="PS00076">
    <property type="entry name" value="PYRIDINE_REDOX_1"/>
    <property type="match status" value="1"/>
</dbReference>
<protein>
    <recommendedName>
        <fullName>Mercuric reductase</fullName>
        <ecNumber evidence="1">1.16.1.1</ecNumber>
    </recommendedName>
    <alternativeName>
        <fullName>Hg(II) reductase</fullName>
    </alternativeName>
</protein>
<accession>Q54465</accession>
<reference key="1">
    <citation type="journal article" date="1997" name="FEMS Microbiol. Rev.">
        <title>Distribution, diversity and evolution of the bacterial mercury resistance (mer) operon.</title>
        <authorList>
            <person name="Osborn A.M."/>
            <person name="Bruce K.D."/>
            <person name="Strike P."/>
            <person name="Ritchie D.A."/>
        </authorList>
    </citation>
    <scope>NUCLEOTIDE SEQUENCE [GENOMIC DNA]</scope>
</reference>
<comment type="function">
    <text evidence="1">Resistance to Hg(2+) in bacteria appears to be governed by a specialized system which includes mercuric reductase. MerA protein is responsible for volatilizing mercury as Hg(0).</text>
</comment>
<comment type="catalytic activity">
    <reaction evidence="1">
        <text>Hg + NADP(+) + H(+) = Hg(2+) + NADPH</text>
        <dbReference type="Rhea" id="RHEA:23856"/>
        <dbReference type="ChEBI" id="CHEBI:15378"/>
        <dbReference type="ChEBI" id="CHEBI:16170"/>
        <dbReference type="ChEBI" id="CHEBI:16793"/>
        <dbReference type="ChEBI" id="CHEBI:57783"/>
        <dbReference type="ChEBI" id="CHEBI:58349"/>
        <dbReference type="EC" id="1.16.1.1"/>
    </reaction>
</comment>
<comment type="cofactor">
    <cofactor evidence="1">
        <name>FAD</name>
        <dbReference type="ChEBI" id="CHEBI:57692"/>
    </cofactor>
    <text evidence="1">Binds 1 FAD per subunit.</text>
</comment>
<comment type="subunit">
    <text evidence="1">Homodimer.</text>
</comment>
<comment type="miscellaneous">
    <text evidence="1">The active site is a redox-active disulfide bond.</text>
</comment>
<comment type="similarity">
    <text evidence="3">Belongs to the class-I pyridine nucleotide-disulfide oxidoreductase family.</text>
</comment>
<feature type="chain" id="PRO_0000067999" description="Mercuric reductase">
    <location>
        <begin position="1"/>
        <end position="557"/>
    </location>
</feature>
<feature type="domain" description="HMA" evidence="2">
    <location>
        <begin position="1"/>
        <end position="65"/>
    </location>
</feature>
<feature type="binding site" evidence="2">
    <location>
        <position position="11"/>
    </location>
    <ligand>
        <name>a metal cation</name>
        <dbReference type="ChEBI" id="CHEBI:25213"/>
    </ligand>
</feature>
<feature type="binding site" evidence="2">
    <location>
        <position position="14"/>
    </location>
    <ligand>
        <name>a metal cation</name>
        <dbReference type="ChEBI" id="CHEBI:25213"/>
    </ligand>
</feature>
<feature type="binding site" evidence="1">
    <location>
        <position position="106"/>
    </location>
    <ligand>
        <name>FAD</name>
        <dbReference type="ChEBI" id="CHEBI:57692"/>
    </ligand>
</feature>
<feature type="binding site" evidence="1">
    <location>
        <position position="126"/>
    </location>
    <ligand>
        <name>FAD</name>
        <dbReference type="ChEBI" id="CHEBI:57692"/>
    </ligand>
</feature>
<feature type="binding site" evidence="1">
    <location>
        <position position="142"/>
    </location>
    <ligand>
        <name>FAD</name>
        <dbReference type="ChEBI" id="CHEBI:57692"/>
    </ligand>
</feature>
<feature type="binding site" evidence="1">
    <location>
        <position position="207"/>
    </location>
    <ligand>
        <name>FAD</name>
        <dbReference type="ChEBI" id="CHEBI:57692"/>
    </ligand>
</feature>
<feature type="binding site" evidence="1">
    <location>
        <position position="399"/>
    </location>
    <ligand>
        <name>FAD</name>
        <dbReference type="ChEBI" id="CHEBI:57692"/>
    </ligand>
</feature>
<feature type="binding site" evidence="1">
    <location>
        <position position="407"/>
    </location>
    <ligand>
        <name>FAD</name>
        <dbReference type="ChEBI" id="CHEBI:57692"/>
    </ligand>
</feature>
<feature type="binding site" evidence="1">
    <location>
        <position position="554"/>
    </location>
    <ligand>
        <name>Hg(2+)</name>
        <dbReference type="ChEBI" id="CHEBI:16793"/>
    </ligand>
</feature>
<feature type="binding site" evidence="1">
    <location>
        <position position="555"/>
    </location>
    <ligand>
        <name>Hg(2+)</name>
        <dbReference type="ChEBI" id="CHEBI:16793"/>
    </ligand>
</feature>
<feature type="disulfide bond" description="Redox-active" evidence="1">
    <location>
        <begin position="133"/>
        <end position="138"/>
    </location>
</feature>
<keyword id="KW-1015">Disulfide bond</keyword>
<keyword id="KW-0274">FAD</keyword>
<keyword id="KW-0285">Flavoprotein</keyword>
<keyword id="KW-0475">Mercuric resistance</keyword>
<keyword id="KW-0476">Mercury</keyword>
<keyword id="KW-0479">Metal-binding</keyword>
<keyword id="KW-0521">NADP</keyword>
<keyword id="KW-0560">Oxidoreductase</keyword>
<keyword id="KW-0614">Plasmid</keyword>
<keyword id="KW-0676">Redox-active center</keyword>
<name>MERA_SHEPU</name>
<organism>
    <name type="scientific">Shewanella putrefaciens</name>
    <name type="common">Pseudomonas putrefaciens</name>
    <dbReference type="NCBI Taxonomy" id="24"/>
    <lineage>
        <taxon>Bacteria</taxon>
        <taxon>Pseudomonadati</taxon>
        <taxon>Pseudomonadota</taxon>
        <taxon>Gammaproteobacteria</taxon>
        <taxon>Alteromonadales</taxon>
        <taxon>Shewanellaceae</taxon>
        <taxon>Shewanella</taxon>
    </lineage>
</organism>
<proteinExistence type="inferred from homology"/>
<evidence type="ECO:0000250" key="1">
    <source>
        <dbReference type="UniProtKB" id="P00392"/>
    </source>
</evidence>
<evidence type="ECO:0000255" key="2">
    <source>
        <dbReference type="PROSITE-ProRule" id="PRU00280"/>
    </source>
</evidence>
<evidence type="ECO:0000305" key="3"/>
<gene>
    <name type="primary">merA</name>
</gene>